<dbReference type="EC" id="3.5.1.23" evidence="2"/>
<dbReference type="EC" id="3.5.1.-" evidence="2"/>
<dbReference type="EMBL" id="AF214647">
    <property type="protein sequence ID" value="AAG43956.1"/>
    <property type="molecule type" value="mRNA"/>
</dbReference>
<dbReference type="EMBL" id="BC061540">
    <property type="protein sequence ID" value="AAH61540.1"/>
    <property type="molecule type" value="mRNA"/>
</dbReference>
<dbReference type="RefSeq" id="NP_445859.2">
    <property type="nucleotide sequence ID" value="NM_053407.3"/>
</dbReference>
<dbReference type="SMR" id="Q6P7S1"/>
<dbReference type="BioGRID" id="249967">
    <property type="interactions" value="1"/>
</dbReference>
<dbReference type="FunCoup" id="Q6P7S1">
    <property type="interactions" value="1274"/>
</dbReference>
<dbReference type="IntAct" id="Q6P7S1">
    <property type="interactions" value="2"/>
</dbReference>
<dbReference type="STRING" id="10116.ENSRNOP00000074724"/>
<dbReference type="BindingDB" id="Q6P7S1"/>
<dbReference type="ChEMBL" id="CHEMBL2331070"/>
<dbReference type="DrugCentral" id="Q6P7S1"/>
<dbReference type="MEROPS" id="C89.001"/>
<dbReference type="GlyCosmos" id="Q6P7S1">
    <property type="glycosylation" value="4 sites, 4 glycans"/>
</dbReference>
<dbReference type="GlyGen" id="Q6P7S1">
    <property type="glycosylation" value="4 sites, 6 N-linked glycans (1 site)"/>
</dbReference>
<dbReference type="iPTMnet" id="Q6P7S1"/>
<dbReference type="PhosphoSitePlus" id="Q6P7S1"/>
<dbReference type="SwissPalm" id="Q6P7S1"/>
<dbReference type="jPOST" id="Q6P7S1"/>
<dbReference type="PaxDb" id="10116-ENSRNOP00000013463"/>
<dbReference type="GeneID" id="84431"/>
<dbReference type="KEGG" id="rno:84431"/>
<dbReference type="AGR" id="RGD:621568"/>
<dbReference type="CTD" id="427"/>
<dbReference type="RGD" id="621568">
    <property type="gene designation" value="Asah1"/>
</dbReference>
<dbReference type="VEuPathDB" id="HostDB:ENSRNOG00000010034"/>
<dbReference type="eggNOG" id="ENOG502QVBG">
    <property type="taxonomic scope" value="Eukaryota"/>
</dbReference>
<dbReference type="HOGENOM" id="CLU_054401_0_0_1"/>
<dbReference type="InParanoid" id="Q6P7S1"/>
<dbReference type="OrthoDB" id="12277at9989"/>
<dbReference type="PhylomeDB" id="Q6P7S1"/>
<dbReference type="TreeFam" id="TF313219"/>
<dbReference type="BRENDA" id="3.5.1.23">
    <property type="organism ID" value="5301"/>
</dbReference>
<dbReference type="BRENDA" id="3.5.1.60">
    <property type="organism ID" value="5301"/>
</dbReference>
<dbReference type="Reactome" id="R-RNO-6798695">
    <property type="pathway name" value="Neutrophil degranulation"/>
</dbReference>
<dbReference type="Reactome" id="R-RNO-9840310">
    <property type="pathway name" value="Glycosphingolipid catabolism"/>
</dbReference>
<dbReference type="UniPathway" id="UPA00222"/>
<dbReference type="PRO" id="PR:Q6P7S1"/>
<dbReference type="Proteomes" id="UP000002494">
    <property type="component" value="Chromosome 16"/>
</dbReference>
<dbReference type="Bgee" id="ENSRNOG00000010034">
    <property type="expression patterns" value="Expressed in ovary and 20 other cell types or tissues"/>
</dbReference>
<dbReference type="ExpressionAtlas" id="Q6P7S1">
    <property type="expression patterns" value="baseline and differential"/>
</dbReference>
<dbReference type="GO" id="GO:0005615">
    <property type="term" value="C:extracellular space"/>
    <property type="evidence" value="ECO:0000250"/>
    <property type="project" value="UniProtKB"/>
</dbReference>
<dbReference type="GO" id="GO:0005764">
    <property type="term" value="C:lysosome"/>
    <property type="evidence" value="ECO:0000250"/>
    <property type="project" value="UniProtKB"/>
</dbReference>
<dbReference type="GO" id="GO:0016020">
    <property type="term" value="C:membrane"/>
    <property type="evidence" value="ECO:0007669"/>
    <property type="project" value="GOC"/>
</dbReference>
<dbReference type="GO" id="GO:0005634">
    <property type="term" value="C:nucleus"/>
    <property type="evidence" value="ECO:0000266"/>
    <property type="project" value="RGD"/>
</dbReference>
<dbReference type="GO" id="GO:0017064">
    <property type="term" value="F:fatty acid amide hydrolase activity"/>
    <property type="evidence" value="ECO:0007669"/>
    <property type="project" value="InterPro"/>
</dbReference>
<dbReference type="GO" id="GO:0016811">
    <property type="term" value="F:hydrolase activity, acting on carbon-nitrogen (but not peptide) bonds, in linear amides"/>
    <property type="evidence" value="ECO:0000266"/>
    <property type="project" value="RGD"/>
</dbReference>
<dbReference type="GO" id="GO:0017040">
    <property type="term" value="F:N-acylsphingosine amidohydrolase activity"/>
    <property type="evidence" value="ECO:0000250"/>
    <property type="project" value="UniProtKB"/>
</dbReference>
<dbReference type="GO" id="GO:0071356">
    <property type="term" value="P:cellular response to tumor necrosis factor"/>
    <property type="evidence" value="ECO:0000250"/>
    <property type="project" value="UniProtKB"/>
</dbReference>
<dbReference type="GO" id="GO:0046513">
    <property type="term" value="P:ceramide biosynthetic process"/>
    <property type="evidence" value="ECO:0000250"/>
    <property type="project" value="UniProtKB"/>
</dbReference>
<dbReference type="GO" id="GO:0046514">
    <property type="term" value="P:ceramide catabolic process"/>
    <property type="evidence" value="ECO:0000250"/>
    <property type="project" value="UniProtKB"/>
</dbReference>
<dbReference type="GO" id="GO:0006631">
    <property type="term" value="P:fatty acid metabolic process"/>
    <property type="evidence" value="ECO:0007669"/>
    <property type="project" value="InterPro"/>
</dbReference>
<dbReference type="GO" id="GO:0030216">
    <property type="term" value="P:keratinocyte differentiation"/>
    <property type="evidence" value="ECO:0000250"/>
    <property type="project" value="UniProtKB"/>
</dbReference>
<dbReference type="GO" id="GO:0030324">
    <property type="term" value="P:lung development"/>
    <property type="evidence" value="ECO:0000314"/>
    <property type="project" value="RGD"/>
</dbReference>
<dbReference type="GO" id="GO:0062098">
    <property type="term" value="P:regulation of programmed necrotic cell death"/>
    <property type="evidence" value="ECO:0000250"/>
    <property type="project" value="UniProtKB"/>
</dbReference>
<dbReference type="GO" id="GO:0050810">
    <property type="term" value="P:regulation of steroid biosynthetic process"/>
    <property type="evidence" value="ECO:0000250"/>
    <property type="project" value="UniProtKB"/>
</dbReference>
<dbReference type="GO" id="GO:0046512">
    <property type="term" value="P:sphingosine biosynthetic process"/>
    <property type="evidence" value="ECO:0000250"/>
    <property type="project" value="UniProtKB"/>
</dbReference>
<dbReference type="CDD" id="cd01903">
    <property type="entry name" value="Ntn_AC_NAAA"/>
    <property type="match status" value="1"/>
</dbReference>
<dbReference type="FunFam" id="3.60.60.10:FF:000002">
    <property type="entry name" value="N-acylsphingosine amidohydrolase 1"/>
    <property type="match status" value="1"/>
</dbReference>
<dbReference type="Gene3D" id="3.60.60.10">
    <property type="entry name" value="Penicillin V Acylase, Chain A"/>
    <property type="match status" value="1"/>
</dbReference>
<dbReference type="InterPro" id="IPR016699">
    <property type="entry name" value="Acid_ceramidase-like"/>
</dbReference>
<dbReference type="InterPro" id="IPR029130">
    <property type="entry name" value="Acid_ceramidase_N"/>
</dbReference>
<dbReference type="InterPro" id="IPR029132">
    <property type="entry name" value="CBAH/NAAA_C"/>
</dbReference>
<dbReference type="PANTHER" id="PTHR28583">
    <property type="entry name" value="ACID AMIDASE"/>
    <property type="match status" value="1"/>
</dbReference>
<dbReference type="PANTHER" id="PTHR28583:SF1">
    <property type="entry name" value="ACID CERAMIDASE"/>
    <property type="match status" value="1"/>
</dbReference>
<dbReference type="Pfam" id="PF02275">
    <property type="entry name" value="CBAH"/>
    <property type="match status" value="1"/>
</dbReference>
<dbReference type="Pfam" id="PF15508">
    <property type="entry name" value="NAAA-beta"/>
    <property type="match status" value="1"/>
</dbReference>
<dbReference type="PIRSF" id="PIRSF017632">
    <property type="entry name" value="Acid_ceramidase-like"/>
    <property type="match status" value="1"/>
</dbReference>
<sequence>MLGRSLLTWVLAAAVTCAQAQQVPPWTEDCRKSTYPPSGPTYRGPVPWYTINLDLPPYKRWHELLAHKAPVLRTLVNSISNLVNAFVPSGKIMQMVDEKLPGLIGSIPGPFGEEMRGIADVTGIPLGEIISFNIFYELFTMCTSIITEDGKGHLLHGRNMDFGIFLGWNINNNTWVVTEELKPLTVNLDFQRNNKTVFKATSFAGYVGMLTGFKPGLLSLTLNERFSLNGGYLGILEWMFGKKNAQWVGFITRSVLENSTSYEEAKNILTKTKITAPAYFILGGNQSGEGCVITRERKESLDVYELDPKHGRWYVVQTNYDRWKNTLFLDDRRTPAKKCLNHTTQKNLSFATIYDVLSTKPVLNKLTVFTTLIDVTKDQFESHLRDCPDPCIGW</sequence>
<organism>
    <name type="scientific">Rattus norvegicus</name>
    <name type="common">Rat</name>
    <dbReference type="NCBI Taxonomy" id="10116"/>
    <lineage>
        <taxon>Eukaryota</taxon>
        <taxon>Metazoa</taxon>
        <taxon>Chordata</taxon>
        <taxon>Craniata</taxon>
        <taxon>Vertebrata</taxon>
        <taxon>Euteleostomi</taxon>
        <taxon>Mammalia</taxon>
        <taxon>Eutheria</taxon>
        <taxon>Euarchontoglires</taxon>
        <taxon>Glires</taxon>
        <taxon>Rodentia</taxon>
        <taxon>Myomorpha</taxon>
        <taxon>Muroidea</taxon>
        <taxon>Muridae</taxon>
        <taxon>Murinae</taxon>
        <taxon>Rattus</taxon>
    </lineage>
</organism>
<keyword id="KW-1015">Disulfide bond</keyword>
<keyword id="KW-0325">Glycoprotein</keyword>
<keyword id="KW-0378">Hydrolase</keyword>
<keyword id="KW-0443">Lipid metabolism</keyword>
<keyword id="KW-0458">Lysosome</keyword>
<keyword id="KW-1185">Reference proteome</keyword>
<keyword id="KW-0964">Secreted</keyword>
<keyword id="KW-0732">Signal</keyword>
<keyword id="KW-0746">Sphingolipid metabolism</keyword>
<keyword id="KW-0865">Zymogen</keyword>
<accession>Q6P7S1</accession>
<accession>Q9EQJ6</accession>
<feature type="signal peptide" evidence="3">
    <location>
        <begin position="1"/>
        <end position="20"/>
    </location>
</feature>
<feature type="chain" id="PRO_0000378102" description="Acid ceramidase">
    <location>
        <begin position="21"/>
        <end position="394"/>
    </location>
</feature>
<feature type="chain" id="PRO_0000446284" description="Acid ceramidase subunit alpha" evidence="2">
    <location>
        <begin position="21"/>
        <end position="141"/>
    </location>
</feature>
<feature type="chain" id="PRO_0000446285" description="Acid ceramidase subunit beta" evidence="2">
    <location>
        <begin position="142"/>
        <end position="394"/>
    </location>
</feature>
<feature type="active site" description="Nucleophile" evidence="2">
    <location>
        <position position="142"/>
    </location>
</feature>
<feature type="site" description="Important for catalytic activity" evidence="2">
    <location>
        <position position="161"/>
    </location>
</feature>
<feature type="site" description="Important for catalytic activity" evidence="2">
    <location>
        <position position="319"/>
    </location>
</feature>
<feature type="site" description="Important for catalytic activity" evidence="2">
    <location>
        <position position="332"/>
    </location>
</feature>
<feature type="glycosylation site" description="N-linked (GlcNAc...) asparagine" evidence="3">
    <location>
        <position position="194"/>
    </location>
</feature>
<feature type="glycosylation site" description="N-linked (GlcNAc...) asparagine" evidence="6">
    <location>
        <position position="258"/>
    </location>
</feature>
<feature type="glycosylation site" description="N-linked (GlcNAc...) asparagine" evidence="3">
    <location>
        <position position="285"/>
    </location>
</feature>
<feature type="glycosylation site" description="N-linked (GlcNAc...) asparagine" evidence="3">
    <location>
        <position position="341"/>
    </location>
</feature>
<feature type="disulfide bond" description="Interchain (between alpha and beta subunits)" evidence="2">
    <location>
        <begin position="30"/>
        <end position="339"/>
    </location>
</feature>
<feature type="disulfide bond" evidence="1">
    <location>
        <begin position="387"/>
        <end position="391"/>
    </location>
</feature>
<feature type="sequence conflict" description="In Ref. 1; AAG43956." evidence="4" ref="1">
    <original>V</original>
    <variation>G</variation>
    <location>
        <position position="375"/>
    </location>
</feature>
<feature type="sequence conflict" description="In Ref. 1; AAG43956." evidence="4" ref="1">
    <original>Q</original>
    <variation>P</variation>
    <location>
        <position position="379"/>
    </location>
</feature>
<proteinExistence type="evidence at protein level"/>
<evidence type="ECO:0000250" key="1">
    <source>
        <dbReference type="UniProtKB" id="A0A0P6JG37"/>
    </source>
</evidence>
<evidence type="ECO:0000250" key="2">
    <source>
        <dbReference type="UniProtKB" id="Q13510"/>
    </source>
</evidence>
<evidence type="ECO:0000255" key="3"/>
<evidence type="ECO:0000305" key="4"/>
<evidence type="ECO:0000312" key="5">
    <source>
        <dbReference type="RGD" id="621568"/>
    </source>
</evidence>
<evidence type="ECO:0007744" key="6">
    <source>
    </source>
</evidence>
<gene>
    <name evidence="5" type="primary">Asah1</name>
</gene>
<reference key="1">
    <citation type="submission" date="1999-12" db="EMBL/GenBank/DDBJ databases">
        <title>Complete coding sequence of rat ceramidase.</title>
        <authorList>
            <person name="Frenck J."/>
            <person name="Sol-Church K."/>
            <person name="McKay C."/>
            <person name="Mason R."/>
        </authorList>
    </citation>
    <scope>NUCLEOTIDE SEQUENCE [MRNA]</scope>
    <source>
        <tissue>Brain</tissue>
    </source>
</reference>
<reference key="2">
    <citation type="journal article" date="2004" name="Genome Res.">
        <title>The status, quality, and expansion of the NIH full-length cDNA project: the Mammalian Gene Collection (MGC).</title>
        <authorList>
            <consortium name="The MGC Project Team"/>
        </authorList>
    </citation>
    <scope>NUCLEOTIDE SEQUENCE [LARGE SCALE MRNA]</scope>
    <source>
        <tissue>Pituitary</tissue>
    </source>
</reference>
<reference key="3">
    <citation type="journal article" date="2013" name="J. Proteome Res.">
        <title>Site-specific glycan-peptide analysis for determination of N-glycoproteome heterogeneity.</title>
        <authorList>
            <person name="Parker B.L."/>
            <person name="Thaysen-Andersen M."/>
            <person name="Solis N."/>
            <person name="Scott N.E."/>
            <person name="Larsen M.R."/>
            <person name="Graham M.E."/>
            <person name="Packer N.H."/>
            <person name="Cordwell S.J."/>
        </authorList>
    </citation>
    <scope>GLYCOSYLATION [LARGE SCALE ANALYSIS] AT ASN-258</scope>
    <scope>IDENTIFICATION BY MASS SPECTROMETRY [LARGE SCALE ANALYSIS]</scope>
    <source>
        <tissue>Brain</tissue>
    </source>
</reference>
<name>ASAH1_RAT</name>
<protein>
    <recommendedName>
        <fullName evidence="4">Acid ceramidase</fullName>
        <shortName>AC</shortName>
        <shortName>ACDase</shortName>
        <shortName>Acid CDase</shortName>
        <ecNumber evidence="2">3.5.1.23</ecNumber>
    </recommendedName>
    <alternativeName>
        <fullName>Acylsphingosine deacylase</fullName>
    </alternativeName>
    <alternativeName>
        <fullName evidence="2">N-acylethanolamine hydrolase ASAH1</fullName>
        <ecNumber evidence="2">3.5.1.-</ecNumber>
    </alternativeName>
    <alternativeName>
        <fullName>N-acylsphingosine amidohydrolase</fullName>
    </alternativeName>
    <component>
        <recommendedName>
            <fullName evidence="2">Acid ceramidase subunit alpha</fullName>
        </recommendedName>
    </component>
    <component>
        <recommendedName>
            <fullName evidence="2">Acid ceramidase subunit beta</fullName>
        </recommendedName>
    </component>
</protein>
<comment type="function">
    <text evidence="2">Lysosomal ceramidase that hydrolyzes sphingolipid ceramides into sphingosine and free fatty acids at acidic pH (By similarity). Ceramides, sphingosine, and its phosphorylated form sphingosine-1-phosphate are bioactive lipids that mediate cellular signaling pathways regulating several biological processes including cell proliferation, apoptosis and differentiation (By similarity). Has a higher catalytic efficiency towards C12-ceramides versus other ceramides (By similarity). Also catalyzes the reverse reaction allowing the synthesis of ceramides from fatty acids and sphingosine (By similarity). For the reverse synthetic reaction, the natural sphingosine D-erythro isomer is more efficiently utilized as a substrate compared to D-erythro-dihydrosphingosine and D-erythro-phytosphingosine, while the fatty acids with chain lengths of 12 or 14 carbons are the most efficiently used (By similarity). Also has an N-acylethanolamine hydrolase activity (By similarity). By regulating the levels of ceramides, sphingosine and sphingosine-1-phosphate in the epidermis, mediates the calcium-induced differentiation of epidermal keratinocytes (By similarity). Also indirectly regulates tumor necrosis factor/TNF-induced apoptosis (By similarity). By regulating the intracellular balance between ceramides and sphingosine, in adrenocortical cells, probably also acts as a regulator of steroidogenesis (By similarity).</text>
</comment>
<comment type="catalytic activity">
    <reaction evidence="2">
        <text>an N-acylsphing-4-enine + H2O = sphing-4-enine + a fatty acid</text>
        <dbReference type="Rhea" id="RHEA:20856"/>
        <dbReference type="ChEBI" id="CHEBI:15377"/>
        <dbReference type="ChEBI" id="CHEBI:28868"/>
        <dbReference type="ChEBI" id="CHEBI:52639"/>
        <dbReference type="ChEBI" id="CHEBI:57756"/>
        <dbReference type="EC" id="3.5.1.23"/>
    </reaction>
</comment>
<comment type="catalytic activity">
    <reaction evidence="2">
        <text>N-dodecanoylsphing-4-enine + H2O = dodecanoate + sphing-4-enine</text>
        <dbReference type="Rhea" id="RHEA:41291"/>
        <dbReference type="ChEBI" id="CHEBI:15377"/>
        <dbReference type="ChEBI" id="CHEBI:18262"/>
        <dbReference type="ChEBI" id="CHEBI:57756"/>
        <dbReference type="ChEBI" id="CHEBI:72956"/>
    </reaction>
    <physiologicalReaction direction="left-to-right" evidence="2">
        <dbReference type="Rhea" id="RHEA:41292"/>
    </physiologicalReaction>
    <physiologicalReaction direction="right-to-left" evidence="2">
        <dbReference type="Rhea" id="RHEA:41293"/>
    </physiologicalReaction>
</comment>
<comment type="catalytic activity">
    <reaction evidence="2">
        <text>N-tetradecanoylsphing-4-enine + H2O = tetradecanoate + sphing-4-enine</text>
        <dbReference type="Rhea" id="RHEA:41287"/>
        <dbReference type="ChEBI" id="CHEBI:15377"/>
        <dbReference type="ChEBI" id="CHEBI:30807"/>
        <dbReference type="ChEBI" id="CHEBI:57756"/>
        <dbReference type="ChEBI" id="CHEBI:72957"/>
    </reaction>
    <physiologicalReaction direction="right-to-left" evidence="2">
        <dbReference type="Rhea" id="RHEA:41289"/>
    </physiologicalReaction>
</comment>
<comment type="catalytic activity">
    <reaction evidence="2">
        <text>N-hexadecanoylsphing-4-enine + H2O = sphing-4-enine + hexadecanoate</text>
        <dbReference type="Rhea" id="RHEA:38891"/>
        <dbReference type="ChEBI" id="CHEBI:7896"/>
        <dbReference type="ChEBI" id="CHEBI:15377"/>
        <dbReference type="ChEBI" id="CHEBI:57756"/>
        <dbReference type="ChEBI" id="CHEBI:72959"/>
    </reaction>
    <physiologicalReaction direction="left-to-right" evidence="2">
        <dbReference type="Rhea" id="RHEA:38892"/>
    </physiologicalReaction>
    <physiologicalReaction direction="right-to-left" evidence="2">
        <dbReference type="Rhea" id="RHEA:38893"/>
    </physiologicalReaction>
</comment>
<comment type="catalytic activity">
    <reaction evidence="2">
        <text>N-octadecanoylsphing-4-enine + H2O = sphing-4-enine + octadecanoate</text>
        <dbReference type="Rhea" id="RHEA:41279"/>
        <dbReference type="ChEBI" id="CHEBI:15377"/>
        <dbReference type="ChEBI" id="CHEBI:25629"/>
        <dbReference type="ChEBI" id="CHEBI:57756"/>
        <dbReference type="ChEBI" id="CHEBI:72961"/>
    </reaction>
    <physiologicalReaction direction="left-to-right" evidence="2">
        <dbReference type="Rhea" id="RHEA:41280"/>
    </physiologicalReaction>
    <physiologicalReaction direction="right-to-left" evidence="2">
        <dbReference type="Rhea" id="RHEA:41281"/>
    </physiologicalReaction>
</comment>
<comment type="catalytic activity">
    <reaction evidence="2">
        <text>N-dodecanoyl-(4R)-hydroxysphinganine + H2O = (4R)-hydroxysphinganine + dodecanoate</text>
        <dbReference type="Rhea" id="RHEA:41303"/>
        <dbReference type="ChEBI" id="CHEBI:15377"/>
        <dbReference type="ChEBI" id="CHEBI:18262"/>
        <dbReference type="ChEBI" id="CHEBI:64124"/>
        <dbReference type="ChEBI" id="CHEBI:78001"/>
    </reaction>
    <physiologicalReaction direction="right-to-left" evidence="2">
        <dbReference type="Rhea" id="RHEA:41305"/>
    </physiologicalReaction>
</comment>
<comment type="catalytic activity">
    <reaction evidence="2">
        <text>N-(dodecanoyl)-sphinganine + H2O = dodecanoate + sphinganine</text>
        <dbReference type="Rhea" id="RHEA:45448"/>
        <dbReference type="ChEBI" id="CHEBI:15377"/>
        <dbReference type="ChEBI" id="CHEBI:18262"/>
        <dbReference type="ChEBI" id="CHEBI:57817"/>
        <dbReference type="ChEBI" id="CHEBI:85261"/>
    </reaction>
    <physiologicalReaction direction="right-to-left" evidence="2">
        <dbReference type="Rhea" id="RHEA:45450"/>
    </physiologicalReaction>
</comment>
<comment type="catalytic activity">
    <reaction evidence="2">
        <text>N-(acetyl)-sphing-4-enine + H2O = sphing-4-enine + acetate</text>
        <dbReference type="Rhea" id="RHEA:58484"/>
        <dbReference type="ChEBI" id="CHEBI:15377"/>
        <dbReference type="ChEBI" id="CHEBI:30089"/>
        <dbReference type="ChEBI" id="CHEBI:46979"/>
        <dbReference type="ChEBI" id="CHEBI:57756"/>
    </reaction>
    <physiologicalReaction direction="left-to-right" evidence="2">
        <dbReference type="Rhea" id="RHEA:58485"/>
    </physiologicalReaction>
</comment>
<comment type="catalytic activity">
    <reaction evidence="2">
        <text>N-(hexanoyl)sphing-4-enine + H2O = hexanoate + sphing-4-enine</text>
        <dbReference type="Rhea" id="RHEA:41295"/>
        <dbReference type="ChEBI" id="CHEBI:15377"/>
        <dbReference type="ChEBI" id="CHEBI:17120"/>
        <dbReference type="ChEBI" id="CHEBI:57756"/>
        <dbReference type="ChEBI" id="CHEBI:63867"/>
    </reaction>
    <physiologicalReaction direction="left-to-right" evidence="2">
        <dbReference type="Rhea" id="RHEA:41296"/>
    </physiologicalReaction>
</comment>
<comment type="catalytic activity">
    <reaction evidence="2">
        <text>N-octanoylsphing-4-enine + H2O = octanoate + sphing-4-enine</text>
        <dbReference type="Rhea" id="RHEA:45092"/>
        <dbReference type="ChEBI" id="CHEBI:15377"/>
        <dbReference type="ChEBI" id="CHEBI:25646"/>
        <dbReference type="ChEBI" id="CHEBI:45815"/>
        <dbReference type="ChEBI" id="CHEBI:57756"/>
    </reaction>
    <physiologicalReaction direction="left-to-right" evidence="2">
        <dbReference type="Rhea" id="RHEA:45093"/>
    </physiologicalReaction>
</comment>
<comment type="catalytic activity">
    <reaction evidence="2">
        <text>N-(9Z-octadecenoyl)-sphing-4-enine + H2O = sphing-4-enine + (9Z)-octadecenoate</text>
        <dbReference type="Rhea" id="RHEA:41299"/>
        <dbReference type="ChEBI" id="CHEBI:15377"/>
        <dbReference type="ChEBI" id="CHEBI:30823"/>
        <dbReference type="ChEBI" id="CHEBI:57756"/>
        <dbReference type="ChEBI" id="CHEBI:77996"/>
    </reaction>
    <physiologicalReaction direction="left-to-right" evidence="2">
        <dbReference type="Rhea" id="RHEA:41300"/>
    </physiologicalReaction>
</comment>
<comment type="catalytic activity">
    <reaction evidence="2">
        <text>N-dodecanoylethanolamine + H2O = dodecanoate + ethanolamine</text>
        <dbReference type="Rhea" id="RHEA:45456"/>
        <dbReference type="ChEBI" id="CHEBI:15377"/>
        <dbReference type="ChEBI" id="CHEBI:18262"/>
        <dbReference type="ChEBI" id="CHEBI:57603"/>
        <dbReference type="ChEBI" id="CHEBI:85263"/>
    </reaction>
    <physiologicalReaction direction="left-to-right" evidence="2">
        <dbReference type="Rhea" id="RHEA:45457"/>
    </physiologicalReaction>
</comment>
<comment type="pathway">
    <text evidence="2">Lipid metabolism; sphingolipid metabolism.</text>
</comment>
<comment type="subunit">
    <text evidence="2">Heterodimer; disulfide-linked. The heterodimer is composed of the disulfide-linked alpha and beta chains produced by autocatalytic cleavage of the precursor.</text>
</comment>
<comment type="subcellular location">
    <subcellularLocation>
        <location evidence="2">Lysosome</location>
    </subcellularLocation>
    <subcellularLocation>
        <location evidence="2">Secreted</location>
    </subcellularLocation>
    <text evidence="2">Secretion is extremely low and localization to lysosomes is mannose-6-phosphate receptor-dependent.</text>
</comment>
<comment type="PTM">
    <text evidence="2">N-glycosylated.</text>
</comment>
<comment type="PTM">
    <text evidence="2">Proteolytically cleaved into two chains alpha and beta that remain associated via a disulfide bond. Cleavage gives rise to a conformation change that activates the enzyme. The same catalytic Cys residue mediates the autoproteolytic cleavage and subsequent hydrolysis of lipid substrates. The beta chain may undergo an additional C-terminal processing.</text>
</comment>
<comment type="similarity">
    <text evidence="4">Belongs to the acid ceramidase family.</text>
</comment>